<accession>Q9XSR3</accession>
<keyword id="KW-0963">Cytoplasm</keyword>
<keyword id="KW-0488">Methylation</keyword>
<keyword id="KW-0507">mRNA processing</keyword>
<keyword id="KW-0508">mRNA splicing</keyword>
<keyword id="KW-0539">Nucleus</keyword>
<keyword id="KW-1185">Reference proteome</keyword>
<keyword id="KW-0677">Repeat</keyword>
<keyword id="KW-0694">RNA-binding</keyword>
<dbReference type="EMBL" id="AJ388555">
    <property type="protein sequence ID" value="CAB46854.1"/>
    <property type="molecule type" value="mRNA"/>
</dbReference>
<dbReference type="RefSeq" id="NP_001002955.1">
    <property type="nucleotide sequence ID" value="NM_001002955.1"/>
</dbReference>
<dbReference type="SMR" id="Q9XSR3"/>
<dbReference type="FunCoup" id="Q9XSR3">
    <property type="interactions" value="49"/>
</dbReference>
<dbReference type="STRING" id="9615.ENSCAFP00000063878"/>
<dbReference type="PaxDb" id="9612-ENSCAFP00000023389"/>
<dbReference type="Ensembl" id="ENSCAFT00040032935.1">
    <property type="protein sequence ID" value="ENSCAFP00040028658.1"/>
    <property type="gene ID" value="ENSCAFG00040017744.1"/>
</dbReference>
<dbReference type="Ensembl" id="ENSCAFT00845007224.1">
    <property type="protein sequence ID" value="ENSCAFP00845005751.1"/>
    <property type="gene ID" value="ENSCAFG00845003991.1"/>
</dbReference>
<dbReference type="GeneID" id="403423"/>
<dbReference type="KEGG" id="cfa:403423"/>
<dbReference type="CTD" id="54502"/>
<dbReference type="VEuPathDB" id="HostDB:ENSCAFG00845003991"/>
<dbReference type="eggNOG" id="KOG0117">
    <property type="taxonomic scope" value="Eukaryota"/>
</dbReference>
<dbReference type="GeneTree" id="ENSGT00940000156979"/>
<dbReference type="InParanoid" id="Q9XSR3"/>
<dbReference type="OrthoDB" id="3800936at2759"/>
<dbReference type="Proteomes" id="UP000002254">
    <property type="component" value="Unplaced"/>
</dbReference>
<dbReference type="Proteomes" id="UP000694429">
    <property type="component" value="Unplaced"/>
</dbReference>
<dbReference type="Proteomes" id="UP000694542">
    <property type="component" value="Chromosome 3"/>
</dbReference>
<dbReference type="Proteomes" id="UP000805418">
    <property type="component" value="Chromosome 3"/>
</dbReference>
<dbReference type="GO" id="GO:0005737">
    <property type="term" value="C:cytoplasm"/>
    <property type="evidence" value="ECO:0007669"/>
    <property type="project" value="UniProtKB-SubCell"/>
</dbReference>
<dbReference type="GO" id="GO:0005634">
    <property type="term" value="C:nucleus"/>
    <property type="evidence" value="ECO:0000318"/>
    <property type="project" value="GO_Central"/>
</dbReference>
<dbReference type="GO" id="GO:0003729">
    <property type="term" value="F:mRNA binding"/>
    <property type="evidence" value="ECO:0000318"/>
    <property type="project" value="GO_Central"/>
</dbReference>
<dbReference type="GO" id="GO:0006397">
    <property type="term" value="P:mRNA processing"/>
    <property type="evidence" value="ECO:0007669"/>
    <property type="project" value="UniProtKB-KW"/>
</dbReference>
<dbReference type="GO" id="GO:0008380">
    <property type="term" value="P:RNA splicing"/>
    <property type="evidence" value="ECO:0007669"/>
    <property type="project" value="UniProtKB-KW"/>
</dbReference>
<dbReference type="CDD" id="cd12491">
    <property type="entry name" value="RRM2_RBM47"/>
    <property type="match status" value="1"/>
</dbReference>
<dbReference type="CDD" id="cd12497">
    <property type="entry name" value="RRM3_RBM47"/>
    <property type="match status" value="1"/>
</dbReference>
<dbReference type="FunFam" id="3.30.70.330:FF:000022">
    <property type="entry name" value="APOBEC1 complementation factor isoform X1"/>
    <property type="match status" value="1"/>
</dbReference>
<dbReference type="FunFam" id="3.30.70.330:FF:000026">
    <property type="entry name" value="APOBEC1 complementation factor isoform X1"/>
    <property type="match status" value="1"/>
</dbReference>
<dbReference type="FunFam" id="3.30.70.330:FF:000146">
    <property type="entry name" value="RNA-binding protein 47 isoform X1"/>
    <property type="match status" value="1"/>
</dbReference>
<dbReference type="Gene3D" id="3.30.70.330">
    <property type="match status" value="3"/>
</dbReference>
<dbReference type="InterPro" id="IPR006535">
    <property type="entry name" value="HnRNP_R/Q_splicing_fac"/>
</dbReference>
<dbReference type="InterPro" id="IPR012677">
    <property type="entry name" value="Nucleotide-bd_a/b_plait_sf"/>
</dbReference>
<dbReference type="InterPro" id="IPR035979">
    <property type="entry name" value="RBD_domain_sf"/>
</dbReference>
<dbReference type="InterPro" id="IPR034440">
    <property type="entry name" value="RBM47_RRM2"/>
</dbReference>
<dbReference type="InterPro" id="IPR034445">
    <property type="entry name" value="RBM47_RRM3"/>
</dbReference>
<dbReference type="InterPro" id="IPR000504">
    <property type="entry name" value="RRM_dom"/>
</dbReference>
<dbReference type="NCBIfam" id="TIGR01648">
    <property type="entry name" value="hnRNP-R-Q"/>
    <property type="match status" value="1"/>
</dbReference>
<dbReference type="PANTHER" id="PTHR21245">
    <property type="entry name" value="HETEROGENEOUS NUCLEAR RIBONUCLEOPROTEIN"/>
    <property type="match status" value="1"/>
</dbReference>
<dbReference type="Pfam" id="PF00076">
    <property type="entry name" value="RRM_1"/>
    <property type="match status" value="3"/>
</dbReference>
<dbReference type="SMART" id="SM00360">
    <property type="entry name" value="RRM"/>
    <property type="match status" value="3"/>
</dbReference>
<dbReference type="SUPFAM" id="SSF54928">
    <property type="entry name" value="RNA-binding domain, RBD"/>
    <property type="match status" value="3"/>
</dbReference>
<dbReference type="PROSITE" id="PS50102">
    <property type="entry name" value="RRM"/>
    <property type="match status" value="3"/>
</dbReference>
<proteinExistence type="evidence at transcript level"/>
<reference key="1">
    <citation type="journal article" date="2000" name="Anal. Biochem.">
        <title>A method for the large-scale cloning of nuclear proteins and nuclear targeting sequences on a functional basis.</title>
        <authorList>
            <person name="Pichon B."/>
            <person name="Mercan D."/>
            <person name="Pouillon V."/>
            <person name="Christophe-Hobertus C."/>
            <person name="Christophe D."/>
        </authorList>
    </citation>
    <scope>NUCLEOTIDE SEQUENCE [LARGE SCALE MRNA]</scope>
    <scope>SUBCELLULAR LOCATION</scope>
    <source>
        <tissue>Thyroid</tissue>
    </source>
</reference>
<feature type="chain" id="PRO_0000307854" description="RNA-binding protein 47">
    <location>
        <begin position="1"/>
        <end position="592"/>
    </location>
</feature>
<feature type="domain" description="RRM 1" evidence="4">
    <location>
        <begin position="73"/>
        <end position="151"/>
    </location>
</feature>
<feature type="domain" description="RRM 2" evidence="4">
    <location>
        <begin position="153"/>
        <end position="235"/>
    </location>
</feature>
<feature type="domain" description="RRM 3" evidence="4">
    <location>
        <begin position="248"/>
        <end position="320"/>
    </location>
</feature>
<feature type="region of interest" description="Disordered" evidence="5">
    <location>
        <begin position="1"/>
        <end position="26"/>
    </location>
</feature>
<feature type="compositionally biased region" description="Low complexity" evidence="5">
    <location>
        <begin position="1"/>
        <end position="24"/>
    </location>
</feature>
<feature type="modified residue" description="Asymmetric dimethylarginine; alternate" evidence="2">
    <location>
        <position position="397"/>
    </location>
</feature>
<feature type="modified residue" description="Omega-N-methylarginine; alternate" evidence="2">
    <location>
        <position position="397"/>
    </location>
</feature>
<feature type="modified residue" description="Asymmetric dimethylarginine; alternate" evidence="2">
    <location>
        <position position="408"/>
    </location>
</feature>
<feature type="modified residue" description="Omega-N-methylarginine; alternate" evidence="2">
    <location>
        <position position="408"/>
    </location>
</feature>
<protein>
    <recommendedName>
        <fullName evidence="2">RNA-binding protein 47</fullName>
    </recommendedName>
    <alternativeName>
        <fullName evidence="2">RNA-binding motif protein 47</fullName>
    </alternativeName>
</protein>
<gene>
    <name evidence="2" type="primary">RBM47</name>
    <name evidence="8" type="ORF">BC61</name>
</gene>
<comment type="function">
    <text evidence="1 2">Single-stranded RNA-binding protein that functions in a variety of RNA processes, including alternative splicing, RNA stabilization, and RNA editing. Functions as an enzyme-substrate adapter for the cytidine deaminase APOBEC1. With APOBEC1 forms an mRNA editing complex involved into cytidine to uridine editing of a variety of mRNA molecules. Through the binding of their 3'UTR, also stabilizes a variety of mRNAs and regulates the expression of genes such as the interferon alpha/beta receptor and interleukin-10. Also involved in the alternative splicing of several genes including TJP1. Binds the pre-mRNA (U)GCAUG consensus sequences in downstream intronic regions of alternative exons, regulating their exclusion and inclusion into mRNAs (By similarity). Independently of its RNA-binding activity, could negatively regulate MAVS by promoting its lysosomal degradation (By similarity).</text>
</comment>
<comment type="subunit">
    <text evidence="2">Homodimer. Interacts with A1CF. Interacts with APOBEC1; form an mRNA editing complex. Interacts with RBPMS.</text>
</comment>
<comment type="subcellular location">
    <subcellularLocation>
        <location evidence="6">Nucleus</location>
    </subcellularLocation>
    <subcellularLocation>
        <location evidence="2">Cytoplasm</location>
    </subcellularLocation>
</comment>
<comment type="domain">
    <text evidence="3">The RRM domains are required for mRNA stabilization.</text>
</comment>
<comment type="similarity">
    <text evidence="7">Belongs to the RRM RBM47 family.</text>
</comment>
<evidence type="ECO:0000250" key="1">
    <source>
        <dbReference type="UniProtKB" id="A0A8M1NHK4"/>
    </source>
</evidence>
<evidence type="ECO:0000250" key="2">
    <source>
        <dbReference type="UniProtKB" id="A0AV96"/>
    </source>
</evidence>
<evidence type="ECO:0000250" key="3">
    <source>
        <dbReference type="UniProtKB" id="Q91WT8"/>
    </source>
</evidence>
<evidence type="ECO:0000255" key="4">
    <source>
        <dbReference type="PROSITE-ProRule" id="PRU00176"/>
    </source>
</evidence>
<evidence type="ECO:0000256" key="5">
    <source>
        <dbReference type="SAM" id="MobiDB-lite"/>
    </source>
</evidence>
<evidence type="ECO:0000269" key="6">
    <source>
    </source>
</evidence>
<evidence type="ECO:0000305" key="7"/>
<evidence type="ECO:0000312" key="8">
    <source>
        <dbReference type="EMBL" id="CAB46854.1"/>
    </source>
</evidence>
<organism>
    <name type="scientific">Canis lupus familiaris</name>
    <name type="common">Dog</name>
    <name type="synonym">Canis familiaris</name>
    <dbReference type="NCBI Taxonomy" id="9615"/>
    <lineage>
        <taxon>Eukaryota</taxon>
        <taxon>Metazoa</taxon>
        <taxon>Chordata</taxon>
        <taxon>Craniata</taxon>
        <taxon>Vertebrata</taxon>
        <taxon>Euteleostomi</taxon>
        <taxon>Mammalia</taxon>
        <taxon>Eutheria</taxon>
        <taxon>Laurasiatheria</taxon>
        <taxon>Carnivora</taxon>
        <taxon>Caniformia</taxon>
        <taxon>Canidae</taxon>
        <taxon>Canis</taxon>
    </lineage>
</organism>
<sequence length="592" mass="63524">MTAEDAAAAMSSDSAAGGAASAKAPEGVAGAPNEAALLALLARTGYRMVQENGQRKYGGPPPGWEGPHPQRGCEVFVGKIPRDVYEDELVPVFEAVGRIYELRLMMDFDGKNRGYAFVTYCHKGEAKRAVRELNNHEIRPGRLLGVCCSVDNCRLFIGGIPKMKKREEILEEIAKVTEGVLDVIVYASAADKMKNRGFAFVEYESHRAAAMARRKLMPGRIQLWGHQIAVDWAEPEIDVDEDVMETVKILYVRNLMIETTEDTIKKSFGQFNPGCVERVKKIRDYAFVHFASREDAVLAMNSLNGTELEGSCLEVTLAKPVDKEQYSRYQKAAKGGGAAEAAAPQPGYVYSCDPYTLAYYGYPYNALIGPNRDYFVKAGSIRGRGRGAAGSRAPGPRGSYLGGYSAGRGIYSRYHEGKGKQQEKGYELVPNLEISAVNPVAIKPGTVAIPAIGAQYSMFQAAPAPKMIEDGKIHTMEHMISPIAVQPDPASAAAAAAAAAAAVIPAVSTPPPFQGRPITPVYTVAPNVQRIPAAGLYGAGYVPFAAPATATLATLQKNAAAAAVYGGYAGYIPQAFPAATIQVPIHDVYPTY</sequence>
<name>RBM47_CANLF</name>